<reference key="1">
    <citation type="journal article" date="2008" name="PLoS Genet.">
        <title>Genomic islands in the pathogenic filamentous fungus Aspergillus fumigatus.</title>
        <authorList>
            <person name="Fedorova N.D."/>
            <person name="Khaldi N."/>
            <person name="Joardar V.S."/>
            <person name="Maiti R."/>
            <person name="Amedeo P."/>
            <person name="Anderson M.J."/>
            <person name="Crabtree J."/>
            <person name="Silva J.C."/>
            <person name="Badger J.H."/>
            <person name="Albarraq A."/>
            <person name="Angiuoli S."/>
            <person name="Bussey H."/>
            <person name="Bowyer P."/>
            <person name="Cotty P.J."/>
            <person name="Dyer P.S."/>
            <person name="Egan A."/>
            <person name="Galens K."/>
            <person name="Fraser-Liggett C.M."/>
            <person name="Haas B.J."/>
            <person name="Inman J.M."/>
            <person name="Kent R."/>
            <person name="Lemieux S."/>
            <person name="Malavazi I."/>
            <person name="Orvis J."/>
            <person name="Roemer T."/>
            <person name="Ronning C.M."/>
            <person name="Sundaram J.P."/>
            <person name="Sutton G."/>
            <person name="Turner G."/>
            <person name="Venter J.C."/>
            <person name="White O.R."/>
            <person name="Whitty B.R."/>
            <person name="Youngman P."/>
            <person name="Wolfe K.H."/>
            <person name="Goldman G.H."/>
            <person name="Wortman J.R."/>
            <person name="Jiang B."/>
            <person name="Denning D.W."/>
            <person name="Nierman W.C."/>
        </authorList>
    </citation>
    <scope>NUCLEOTIDE SEQUENCE [LARGE SCALE GENOMIC DNA]</scope>
    <source>
        <strain>ATCC 1020 / DSM 3700 / CBS 544.65 / FGSC A1164 / JCM 1740 / NRRL 181 / WB 181</strain>
    </source>
</reference>
<sequence>MWIINWFYDVLASLGLLNKHAKLLFLGLDNAGKTTLLHMLKNDRVATLQPTAHPTSEELAIGNNRFTTFDLGGHQQARRLWKDYFPEVSGIVFLVDAKDHERFPESKAELDALLAMEELAKVPFLILGNKIDHPDAVSEDELRHQLGLYQTTGKGKVPLEGIRPIEVFMCSVVMRQGYGEGIRWLSQYV</sequence>
<comment type="function">
    <text evidence="1">Small GTPase component of the coat protein complex II (COPII) which promotes the formation of transport vesicles from the endoplasmic reticulum (ER). The coat has two main functions, the physical deformation of the endoplasmic reticulum membrane into vesicles and the selection of cargo molecules. Sar1 controls the coat assembly in a stepwise manner. Activated Sar1-GTP binds to membranes first and recruits the sec23/24 complex. These sec23/24-sar1 prebudding intermediates are then collected by the Sec13/31 complex as subunits polymerize to form coated transport vesicles. Conversion to sar1-GDP triggers coat release and recycles COPII subunits (By similarity).</text>
</comment>
<comment type="catalytic activity">
    <reaction>
        <text>GTP + H2O = GDP + phosphate + H(+)</text>
        <dbReference type="Rhea" id="RHEA:19669"/>
        <dbReference type="ChEBI" id="CHEBI:15377"/>
        <dbReference type="ChEBI" id="CHEBI:15378"/>
        <dbReference type="ChEBI" id="CHEBI:37565"/>
        <dbReference type="ChEBI" id="CHEBI:43474"/>
        <dbReference type="ChEBI" id="CHEBI:58189"/>
    </reaction>
</comment>
<comment type="subunit">
    <text evidence="1">COPII is composed of at least 5 proteins: the sec23/24 complex, the sec13/31 complex and sar1.</text>
</comment>
<comment type="subcellular location">
    <subcellularLocation>
        <location evidence="1">Cytoplasmic vesicle</location>
        <location evidence="1">COPII-coated vesicle membrane</location>
        <topology evidence="1">Peripheral membrane protein</topology>
        <orientation evidence="1">Cytoplasmic side</orientation>
    </subcellularLocation>
    <subcellularLocation>
        <location evidence="1">Endoplasmic reticulum membrane</location>
        <topology evidence="1">Peripheral membrane protein</topology>
        <orientation evidence="1">Cytoplasmic side</orientation>
    </subcellularLocation>
    <subcellularLocation>
        <location evidence="1">Golgi apparatus membrane</location>
        <topology evidence="1">Peripheral membrane protein</topology>
        <orientation evidence="1">Cytoplasmic side</orientation>
    </subcellularLocation>
</comment>
<comment type="similarity">
    <text evidence="2">Belongs to the small GTPase superfamily. SAR1 family.</text>
</comment>
<gene>
    <name type="primary">sar1</name>
    <name type="ORF">NFIA_019790</name>
</gene>
<feature type="chain" id="PRO_0000295519" description="Small COPII coat GTPase sar1">
    <location>
        <begin position="1"/>
        <end position="189"/>
    </location>
</feature>
<feature type="binding site" evidence="1">
    <location>
        <begin position="27"/>
        <end position="34"/>
    </location>
    <ligand>
        <name>GTP</name>
        <dbReference type="ChEBI" id="CHEBI:37565"/>
    </ligand>
</feature>
<feature type="binding site" evidence="1">
    <location>
        <begin position="70"/>
        <end position="73"/>
    </location>
    <ligand>
        <name>GTP</name>
        <dbReference type="ChEBI" id="CHEBI:37565"/>
    </ligand>
</feature>
<feature type="binding site" evidence="1">
    <location>
        <begin position="129"/>
        <end position="132"/>
    </location>
    <ligand>
        <name>GTP</name>
        <dbReference type="ChEBI" id="CHEBI:37565"/>
    </ligand>
</feature>
<accession>A1D4D1</accession>
<dbReference type="EC" id="3.6.5.-"/>
<dbReference type="EMBL" id="DS027688">
    <property type="protein sequence ID" value="EAW23274.1"/>
    <property type="molecule type" value="Genomic_DNA"/>
</dbReference>
<dbReference type="RefSeq" id="XP_001265171.1">
    <property type="nucleotide sequence ID" value="XM_001265170.1"/>
</dbReference>
<dbReference type="SMR" id="A1D4D1"/>
<dbReference type="STRING" id="331117.A1D4D1"/>
<dbReference type="EnsemblFungi" id="EAW23274">
    <property type="protein sequence ID" value="EAW23274"/>
    <property type="gene ID" value="NFIA_019790"/>
</dbReference>
<dbReference type="GeneID" id="4590699"/>
<dbReference type="KEGG" id="nfi:NFIA_019790"/>
<dbReference type="VEuPathDB" id="FungiDB:NFIA_019790"/>
<dbReference type="eggNOG" id="KOG0077">
    <property type="taxonomic scope" value="Eukaryota"/>
</dbReference>
<dbReference type="HOGENOM" id="CLU_040729_6_0_1"/>
<dbReference type="OMA" id="GLWNKHG"/>
<dbReference type="OrthoDB" id="2011769at2759"/>
<dbReference type="Proteomes" id="UP000006702">
    <property type="component" value="Unassembled WGS sequence"/>
</dbReference>
<dbReference type="GO" id="GO:0030127">
    <property type="term" value="C:COPII vesicle coat"/>
    <property type="evidence" value="ECO:0007669"/>
    <property type="project" value="EnsemblFungi"/>
</dbReference>
<dbReference type="GO" id="GO:0070971">
    <property type="term" value="C:endoplasmic reticulum exit site"/>
    <property type="evidence" value="ECO:0007669"/>
    <property type="project" value="EnsemblFungi"/>
</dbReference>
<dbReference type="GO" id="GO:0005789">
    <property type="term" value="C:endoplasmic reticulum membrane"/>
    <property type="evidence" value="ECO:0007669"/>
    <property type="project" value="UniProtKB-SubCell"/>
</dbReference>
<dbReference type="GO" id="GO:0000139">
    <property type="term" value="C:Golgi membrane"/>
    <property type="evidence" value="ECO:0007669"/>
    <property type="project" value="UniProtKB-SubCell"/>
</dbReference>
<dbReference type="GO" id="GO:0044233">
    <property type="term" value="C:mitochondria-associated endoplasmic reticulum membrane contact site"/>
    <property type="evidence" value="ECO:0007669"/>
    <property type="project" value="EnsemblFungi"/>
</dbReference>
<dbReference type="GO" id="GO:0005739">
    <property type="term" value="C:mitochondrion"/>
    <property type="evidence" value="ECO:0007669"/>
    <property type="project" value="GOC"/>
</dbReference>
<dbReference type="GO" id="GO:0005525">
    <property type="term" value="F:GTP binding"/>
    <property type="evidence" value="ECO:0007669"/>
    <property type="project" value="UniProtKB-KW"/>
</dbReference>
<dbReference type="GO" id="GO:0003924">
    <property type="term" value="F:GTPase activity"/>
    <property type="evidence" value="ECO:0007669"/>
    <property type="project" value="EnsemblFungi"/>
</dbReference>
<dbReference type="GO" id="GO:0090158">
    <property type="term" value="P:endoplasmic reticulum membrane organization"/>
    <property type="evidence" value="ECO:0007669"/>
    <property type="project" value="EnsemblFungi"/>
</dbReference>
<dbReference type="GO" id="GO:0006888">
    <property type="term" value="P:endoplasmic reticulum to Golgi vesicle-mediated transport"/>
    <property type="evidence" value="ECO:0007669"/>
    <property type="project" value="EnsemblFungi"/>
</dbReference>
<dbReference type="GO" id="GO:0006886">
    <property type="term" value="P:intracellular protein transport"/>
    <property type="evidence" value="ECO:0007669"/>
    <property type="project" value="InterPro"/>
</dbReference>
<dbReference type="GO" id="GO:0000266">
    <property type="term" value="P:mitochondrial fission"/>
    <property type="evidence" value="ECO:0007669"/>
    <property type="project" value="EnsemblFungi"/>
</dbReference>
<dbReference type="GO" id="GO:0007006">
    <property type="term" value="P:mitochondrial membrane organization"/>
    <property type="evidence" value="ECO:0007669"/>
    <property type="project" value="EnsemblFungi"/>
</dbReference>
<dbReference type="GO" id="GO:0006998">
    <property type="term" value="P:nuclear envelope organization"/>
    <property type="evidence" value="ECO:0007669"/>
    <property type="project" value="EnsemblFungi"/>
</dbReference>
<dbReference type="GO" id="GO:1902953">
    <property type="term" value="P:positive regulation of ER to Golgi vesicle-mediated transport"/>
    <property type="evidence" value="ECO:0007669"/>
    <property type="project" value="EnsemblFungi"/>
</dbReference>
<dbReference type="GO" id="GO:0070863">
    <property type="term" value="P:positive regulation of protein exit from endoplasmic reticulum"/>
    <property type="evidence" value="ECO:0007669"/>
    <property type="project" value="EnsemblFungi"/>
</dbReference>
<dbReference type="GO" id="GO:0003400">
    <property type="term" value="P:regulation of COPII vesicle coating"/>
    <property type="evidence" value="ECO:0007669"/>
    <property type="project" value="EnsemblFungi"/>
</dbReference>
<dbReference type="GO" id="GO:0016050">
    <property type="term" value="P:vesicle organization"/>
    <property type="evidence" value="ECO:0007669"/>
    <property type="project" value="EnsemblFungi"/>
</dbReference>
<dbReference type="CDD" id="cd00879">
    <property type="entry name" value="Sar1"/>
    <property type="match status" value="1"/>
</dbReference>
<dbReference type="FunFam" id="3.40.50.300:FF:000161">
    <property type="entry name" value="Small COPII coat GTPase"/>
    <property type="match status" value="1"/>
</dbReference>
<dbReference type="Gene3D" id="3.40.50.300">
    <property type="entry name" value="P-loop containing nucleotide triphosphate hydrolases"/>
    <property type="match status" value="1"/>
</dbReference>
<dbReference type="InterPro" id="IPR027417">
    <property type="entry name" value="P-loop_NTPase"/>
</dbReference>
<dbReference type="InterPro" id="IPR005225">
    <property type="entry name" value="Small_GTP-bd"/>
</dbReference>
<dbReference type="InterPro" id="IPR006689">
    <property type="entry name" value="Small_GTPase_ARF/SAR"/>
</dbReference>
<dbReference type="InterPro" id="IPR006687">
    <property type="entry name" value="Small_GTPase_SAR1"/>
</dbReference>
<dbReference type="NCBIfam" id="TIGR00231">
    <property type="entry name" value="small_GTP"/>
    <property type="match status" value="1"/>
</dbReference>
<dbReference type="PANTHER" id="PTHR45684">
    <property type="entry name" value="RE74312P"/>
    <property type="match status" value="1"/>
</dbReference>
<dbReference type="Pfam" id="PF00025">
    <property type="entry name" value="Arf"/>
    <property type="match status" value="1"/>
</dbReference>
<dbReference type="PRINTS" id="PR00328">
    <property type="entry name" value="SAR1GTPBP"/>
</dbReference>
<dbReference type="SMART" id="SM00177">
    <property type="entry name" value="ARF"/>
    <property type="match status" value="1"/>
</dbReference>
<dbReference type="SMART" id="SM00178">
    <property type="entry name" value="SAR"/>
    <property type="match status" value="1"/>
</dbReference>
<dbReference type="SUPFAM" id="SSF52540">
    <property type="entry name" value="P-loop containing nucleoside triphosphate hydrolases"/>
    <property type="match status" value="1"/>
</dbReference>
<dbReference type="PROSITE" id="PS51422">
    <property type="entry name" value="SAR1"/>
    <property type="match status" value="1"/>
</dbReference>
<protein>
    <recommendedName>
        <fullName>Small COPII coat GTPase sar1</fullName>
        <ecNumber>3.6.5.-</ecNumber>
    </recommendedName>
</protein>
<name>SAR1_NEOFI</name>
<proteinExistence type="inferred from homology"/>
<keyword id="KW-0968">Cytoplasmic vesicle</keyword>
<keyword id="KW-0256">Endoplasmic reticulum</keyword>
<keyword id="KW-0931">ER-Golgi transport</keyword>
<keyword id="KW-0333">Golgi apparatus</keyword>
<keyword id="KW-0342">GTP-binding</keyword>
<keyword id="KW-0378">Hydrolase</keyword>
<keyword id="KW-0472">Membrane</keyword>
<keyword id="KW-0547">Nucleotide-binding</keyword>
<keyword id="KW-0653">Protein transport</keyword>
<keyword id="KW-1185">Reference proteome</keyword>
<keyword id="KW-0813">Transport</keyword>
<evidence type="ECO:0000250" key="1"/>
<evidence type="ECO:0000305" key="2"/>
<organism>
    <name type="scientific">Neosartorya fischeri (strain ATCC 1020 / DSM 3700 / CBS 544.65 / FGSC A1164 / JCM 1740 / NRRL 181 / WB 181)</name>
    <name type="common">Aspergillus fischerianus</name>
    <dbReference type="NCBI Taxonomy" id="331117"/>
    <lineage>
        <taxon>Eukaryota</taxon>
        <taxon>Fungi</taxon>
        <taxon>Dikarya</taxon>
        <taxon>Ascomycota</taxon>
        <taxon>Pezizomycotina</taxon>
        <taxon>Eurotiomycetes</taxon>
        <taxon>Eurotiomycetidae</taxon>
        <taxon>Eurotiales</taxon>
        <taxon>Aspergillaceae</taxon>
        <taxon>Aspergillus</taxon>
        <taxon>Aspergillus subgen. Fumigati</taxon>
    </lineage>
</organism>